<feature type="chain" id="PRO_1000137693" description="Chaperone protein DnaJ">
    <location>
        <begin position="1"/>
        <end position="391"/>
    </location>
</feature>
<feature type="domain" description="J" evidence="1">
    <location>
        <begin position="4"/>
        <end position="68"/>
    </location>
</feature>
<feature type="repeat" description="CXXCXGXG motif">
    <location>
        <begin position="165"/>
        <end position="172"/>
    </location>
</feature>
<feature type="repeat" description="CXXCXGXG motif">
    <location>
        <begin position="182"/>
        <end position="189"/>
    </location>
</feature>
<feature type="repeat" description="CXXCXGXG motif">
    <location>
        <begin position="208"/>
        <end position="215"/>
    </location>
</feature>
<feature type="repeat" description="CXXCXGXG motif">
    <location>
        <begin position="222"/>
        <end position="229"/>
    </location>
</feature>
<feature type="zinc finger region" description="CR-type" evidence="1">
    <location>
        <begin position="152"/>
        <end position="234"/>
    </location>
</feature>
<feature type="region of interest" description="Disordered" evidence="2">
    <location>
        <begin position="53"/>
        <end position="94"/>
    </location>
</feature>
<feature type="region of interest" description="Disordered" evidence="2">
    <location>
        <begin position="117"/>
        <end position="136"/>
    </location>
</feature>
<feature type="compositionally biased region" description="Basic and acidic residues" evidence="2">
    <location>
        <begin position="53"/>
        <end position="79"/>
    </location>
</feature>
<feature type="compositionally biased region" description="Gly residues" evidence="2">
    <location>
        <begin position="81"/>
        <end position="94"/>
    </location>
</feature>
<feature type="compositionally biased region" description="Gly residues" evidence="2">
    <location>
        <begin position="119"/>
        <end position="129"/>
    </location>
</feature>
<feature type="binding site" evidence="1">
    <location>
        <position position="165"/>
    </location>
    <ligand>
        <name>Zn(2+)</name>
        <dbReference type="ChEBI" id="CHEBI:29105"/>
        <label>1</label>
    </ligand>
</feature>
<feature type="binding site" evidence="1">
    <location>
        <position position="168"/>
    </location>
    <ligand>
        <name>Zn(2+)</name>
        <dbReference type="ChEBI" id="CHEBI:29105"/>
        <label>1</label>
    </ligand>
</feature>
<feature type="binding site" evidence="1">
    <location>
        <position position="182"/>
    </location>
    <ligand>
        <name>Zn(2+)</name>
        <dbReference type="ChEBI" id="CHEBI:29105"/>
        <label>2</label>
    </ligand>
</feature>
<feature type="binding site" evidence="1">
    <location>
        <position position="185"/>
    </location>
    <ligand>
        <name>Zn(2+)</name>
        <dbReference type="ChEBI" id="CHEBI:29105"/>
        <label>2</label>
    </ligand>
</feature>
<feature type="binding site" evidence="1">
    <location>
        <position position="208"/>
    </location>
    <ligand>
        <name>Zn(2+)</name>
        <dbReference type="ChEBI" id="CHEBI:29105"/>
        <label>2</label>
    </ligand>
</feature>
<feature type="binding site" evidence="1">
    <location>
        <position position="211"/>
    </location>
    <ligand>
        <name>Zn(2+)</name>
        <dbReference type="ChEBI" id="CHEBI:29105"/>
        <label>2</label>
    </ligand>
</feature>
<feature type="binding site" evidence="1">
    <location>
        <position position="222"/>
    </location>
    <ligand>
        <name>Zn(2+)</name>
        <dbReference type="ChEBI" id="CHEBI:29105"/>
        <label>1</label>
    </ligand>
</feature>
<feature type="binding site" evidence="1">
    <location>
        <position position="225"/>
    </location>
    <ligand>
        <name>Zn(2+)</name>
        <dbReference type="ChEBI" id="CHEBI:29105"/>
        <label>1</label>
    </ligand>
</feature>
<protein>
    <recommendedName>
        <fullName evidence="1">Chaperone protein DnaJ</fullName>
    </recommendedName>
</protein>
<gene>
    <name evidence="1" type="primary">dnaJ</name>
    <name type="ordered locus">OE_1736R</name>
</gene>
<reference key="1">
    <citation type="journal article" date="2008" name="Genomics">
        <title>Evolution in the laboratory: the genome of Halobacterium salinarum strain R1 compared to that of strain NRC-1.</title>
        <authorList>
            <person name="Pfeiffer F."/>
            <person name="Schuster S.C."/>
            <person name="Broicher A."/>
            <person name="Falb M."/>
            <person name="Palm P."/>
            <person name="Rodewald K."/>
            <person name="Ruepp A."/>
            <person name="Soppa J."/>
            <person name="Tittor J."/>
            <person name="Oesterhelt D."/>
        </authorList>
    </citation>
    <scope>NUCLEOTIDE SEQUENCE [LARGE SCALE GENOMIC DNA]</scope>
    <source>
        <strain>ATCC 29341 / DSM 671 / R1</strain>
    </source>
</reference>
<keyword id="KW-0143">Chaperone</keyword>
<keyword id="KW-0963">Cytoplasm</keyword>
<keyword id="KW-0235">DNA replication</keyword>
<keyword id="KW-0479">Metal-binding</keyword>
<keyword id="KW-0677">Repeat</keyword>
<keyword id="KW-0346">Stress response</keyword>
<keyword id="KW-0862">Zinc</keyword>
<keyword id="KW-0863">Zinc-finger</keyword>
<name>DNAJ_HALS3</name>
<sequence>MSEDFYDVLGVSRDATEDEIMQAYRDQVSEYHPDVSDDPDAEEKFKKIQKAKDVLTDEETRQQYDQLGHERFEEAEKRGATGNGGGGAGGMGGAGGPFGGGMGGGAGGGMGDIFEQFFGGAGGGGGRGRSGPEQGRDLRTDLTVTLSEAYRGVSKQVTVRRPESCADCGGSGYPEDADVRTCPQCDGQGVVTQVRQTPLGRVQQRQECSRCGGEGELHSETCSTCGGQGQTRERATLTVDIPEGIRTGQTLRMDGEGAPGEPGAPNGDLLVDVTVEEHPDFERDGDDLHHRHAVSFPQAVFGAEIEVPTLDGAATFDLDAGTQSGETFRLKGKGMPRLRRRGNGDLYVTVQVVTPESLSDEQRDALEQFAEAGGEEIDVEQGFFEKLKNSF</sequence>
<comment type="function">
    <text evidence="1">Participates actively in the response to hyperosmotic and heat shock by preventing the aggregation of stress-denatured proteins and by disaggregating proteins, also in an autonomous, DnaK-independent fashion. Unfolded proteins bind initially to DnaJ; upon interaction with the DnaJ-bound protein, DnaK hydrolyzes its bound ATP, resulting in the formation of a stable complex. GrpE releases ADP from DnaK; ATP binding to DnaK triggers the release of the substrate protein, thus completing the reaction cycle. Several rounds of ATP-dependent interactions between DnaJ, DnaK and GrpE are required for fully efficient folding. Also involved, together with DnaK and GrpE, in the DNA replication of plasmids through activation of initiation proteins.</text>
</comment>
<comment type="cofactor">
    <cofactor evidence="1">
        <name>Zn(2+)</name>
        <dbReference type="ChEBI" id="CHEBI:29105"/>
    </cofactor>
    <text evidence="1">Binds 2 Zn(2+) ions per monomer.</text>
</comment>
<comment type="subunit">
    <text evidence="1">Homodimer.</text>
</comment>
<comment type="subcellular location">
    <subcellularLocation>
        <location evidence="1">Cytoplasm</location>
    </subcellularLocation>
</comment>
<comment type="domain">
    <text evidence="1">The J domain is necessary and sufficient to stimulate DnaK ATPase activity. Zinc center 1 plays an important role in the autonomous, DnaK-independent chaperone activity of DnaJ. Zinc center 2 is essential for interaction with DnaK and for DnaJ activity.</text>
</comment>
<comment type="similarity">
    <text evidence="1">Belongs to the DnaJ family.</text>
</comment>
<proteinExistence type="inferred from homology"/>
<organism>
    <name type="scientific">Halobacterium salinarum (strain ATCC 29341 / DSM 671 / R1)</name>
    <dbReference type="NCBI Taxonomy" id="478009"/>
    <lineage>
        <taxon>Archaea</taxon>
        <taxon>Methanobacteriati</taxon>
        <taxon>Methanobacteriota</taxon>
        <taxon>Stenosarchaea group</taxon>
        <taxon>Halobacteria</taxon>
        <taxon>Halobacteriales</taxon>
        <taxon>Halobacteriaceae</taxon>
        <taxon>Halobacterium</taxon>
        <taxon>Halobacterium salinarum NRC-34001</taxon>
    </lineage>
</organism>
<evidence type="ECO:0000255" key="1">
    <source>
        <dbReference type="HAMAP-Rule" id="MF_01152"/>
    </source>
</evidence>
<evidence type="ECO:0000256" key="2">
    <source>
        <dbReference type="SAM" id="MobiDB-lite"/>
    </source>
</evidence>
<accession>B0R3H3</accession>
<dbReference type="EMBL" id="AM774415">
    <property type="protein sequence ID" value="CAP13287.1"/>
    <property type="molecule type" value="Genomic_DNA"/>
</dbReference>
<dbReference type="RefSeq" id="WP_010902321.1">
    <property type="nucleotide sequence ID" value="NC_010364.1"/>
</dbReference>
<dbReference type="SMR" id="B0R3H3"/>
<dbReference type="EnsemblBacteria" id="CAP13287">
    <property type="protein sequence ID" value="CAP13287"/>
    <property type="gene ID" value="OE_1736R"/>
</dbReference>
<dbReference type="GeneID" id="68693397"/>
<dbReference type="KEGG" id="hsl:OE_1736R"/>
<dbReference type="HOGENOM" id="CLU_017633_0_7_2"/>
<dbReference type="PhylomeDB" id="B0R3H3"/>
<dbReference type="Proteomes" id="UP000001321">
    <property type="component" value="Chromosome"/>
</dbReference>
<dbReference type="GO" id="GO:0005737">
    <property type="term" value="C:cytoplasm"/>
    <property type="evidence" value="ECO:0007669"/>
    <property type="project" value="UniProtKB-SubCell"/>
</dbReference>
<dbReference type="GO" id="GO:0005524">
    <property type="term" value="F:ATP binding"/>
    <property type="evidence" value="ECO:0007669"/>
    <property type="project" value="InterPro"/>
</dbReference>
<dbReference type="GO" id="GO:0031072">
    <property type="term" value="F:heat shock protein binding"/>
    <property type="evidence" value="ECO:0007669"/>
    <property type="project" value="InterPro"/>
</dbReference>
<dbReference type="GO" id="GO:0051082">
    <property type="term" value="F:unfolded protein binding"/>
    <property type="evidence" value="ECO:0007669"/>
    <property type="project" value="UniProtKB-UniRule"/>
</dbReference>
<dbReference type="GO" id="GO:0008270">
    <property type="term" value="F:zinc ion binding"/>
    <property type="evidence" value="ECO:0007669"/>
    <property type="project" value="UniProtKB-UniRule"/>
</dbReference>
<dbReference type="GO" id="GO:0051085">
    <property type="term" value="P:chaperone cofactor-dependent protein refolding"/>
    <property type="evidence" value="ECO:0007669"/>
    <property type="project" value="TreeGrafter"/>
</dbReference>
<dbReference type="GO" id="GO:0006260">
    <property type="term" value="P:DNA replication"/>
    <property type="evidence" value="ECO:0007669"/>
    <property type="project" value="UniProtKB-KW"/>
</dbReference>
<dbReference type="GO" id="GO:0042026">
    <property type="term" value="P:protein refolding"/>
    <property type="evidence" value="ECO:0007669"/>
    <property type="project" value="TreeGrafter"/>
</dbReference>
<dbReference type="GO" id="GO:0009408">
    <property type="term" value="P:response to heat"/>
    <property type="evidence" value="ECO:0007669"/>
    <property type="project" value="InterPro"/>
</dbReference>
<dbReference type="CDD" id="cd06257">
    <property type="entry name" value="DnaJ"/>
    <property type="match status" value="1"/>
</dbReference>
<dbReference type="CDD" id="cd10747">
    <property type="entry name" value="DnaJ_C"/>
    <property type="match status" value="1"/>
</dbReference>
<dbReference type="CDD" id="cd10719">
    <property type="entry name" value="DnaJ_zf"/>
    <property type="match status" value="1"/>
</dbReference>
<dbReference type="FunFam" id="2.60.260.20:FF:000005">
    <property type="entry name" value="Chaperone protein dnaJ 1, mitochondrial"/>
    <property type="match status" value="1"/>
</dbReference>
<dbReference type="FunFam" id="2.10.230.10:FF:000002">
    <property type="entry name" value="Molecular chaperone DnaJ"/>
    <property type="match status" value="1"/>
</dbReference>
<dbReference type="Gene3D" id="1.10.287.110">
    <property type="entry name" value="DnaJ domain"/>
    <property type="match status" value="1"/>
</dbReference>
<dbReference type="Gene3D" id="2.10.230.10">
    <property type="entry name" value="Heat shock protein DnaJ, cysteine-rich domain"/>
    <property type="match status" value="1"/>
</dbReference>
<dbReference type="Gene3D" id="2.60.260.20">
    <property type="entry name" value="Urease metallochaperone UreE, N-terminal domain"/>
    <property type="match status" value="2"/>
</dbReference>
<dbReference type="HAMAP" id="MF_01152">
    <property type="entry name" value="DnaJ"/>
    <property type="match status" value="1"/>
</dbReference>
<dbReference type="InterPro" id="IPR012724">
    <property type="entry name" value="DnaJ"/>
</dbReference>
<dbReference type="InterPro" id="IPR002939">
    <property type="entry name" value="DnaJ_C"/>
</dbReference>
<dbReference type="InterPro" id="IPR001623">
    <property type="entry name" value="DnaJ_domain"/>
</dbReference>
<dbReference type="InterPro" id="IPR008971">
    <property type="entry name" value="HSP40/DnaJ_pept-bd"/>
</dbReference>
<dbReference type="InterPro" id="IPR001305">
    <property type="entry name" value="HSP_DnaJ_Cys-rich_dom"/>
</dbReference>
<dbReference type="InterPro" id="IPR036410">
    <property type="entry name" value="HSP_DnaJ_Cys-rich_dom_sf"/>
</dbReference>
<dbReference type="InterPro" id="IPR036869">
    <property type="entry name" value="J_dom_sf"/>
</dbReference>
<dbReference type="NCBIfam" id="TIGR02349">
    <property type="entry name" value="DnaJ_bact"/>
    <property type="match status" value="1"/>
</dbReference>
<dbReference type="NCBIfam" id="NF008035">
    <property type="entry name" value="PRK10767.1"/>
    <property type="match status" value="1"/>
</dbReference>
<dbReference type="PANTHER" id="PTHR43096">
    <property type="entry name" value="DNAJ HOMOLOG 1, MITOCHONDRIAL-RELATED"/>
    <property type="match status" value="1"/>
</dbReference>
<dbReference type="PANTHER" id="PTHR43096:SF52">
    <property type="entry name" value="DNAJ HOMOLOG 1, MITOCHONDRIAL-RELATED"/>
    <property type="match status" value="1"/>
</dbReference>
<dbReference type="Pfam" id="PF00226">
    <property type="entry name" value="DnaJ"/>
    <property type="match status" value="1"/>
</dbReference>
<dbReference type="Pfam" id="PF01556">
    <property type="entry name" value="DnaJ_C"/>
    <property type="match status" value="1"/>
</dbReference>
<dbReference type="Pfam" id="PF00684">
    <property type="entry name" value="DnaJ_CXXCXGXG"/>
    <property type="match status" value="1"/>
</dbReference>
<dbReference type="PRINTS" id="PR00625">
    <property type="entry name" value="JDOMAIN"/>
</dbReference>
<dbReference type="SMART" id="SM00271">
    <property type="entry name" value="DnaJ"/>
    <property type="match status" value="1"/>
</dbReference>
<dbReference type="SUPFAM" id="SSF46565">
    <property type="entry name" value="Chaperone J-domain"/>
    <property type="match status" value="1"/>
</dbReference>
<dbReference type="SUPFAM" id="SSF57938">
    <property type="entry name" value="DnaJ/Hsp40 cysteine-rich domain"/>
    <property type="match status" value="1"/>
</dbReference>
<dbReference type="SUPFAM" id="SSF49493">
    <property type="entry name" value="HSP40/DnaJ peptide-binding domain"/>
    <property type="match status" value="2"/>
</dbReference>
<dbReference type="PROSITE" id="PS50076">
    <property type="entry name" value="DNAJ_2"/>
    <property type="match status" value="1"/>
</dbReference>
<dbReference type="PROSITE" id="PS51188">
    <property type="entry name" value="ZF_CR"/>
    <property type="match status" value="1"/>
</dbReference>